<accession>P0DQR7</accession>
<accession>P01519</accession>
<evidence type="ECO:0000250" key="1">
    <source>
        <dbReference type="UniProtKB" id="X5I9Y2"/>
    </source>
</evidence>
<evidence type="ECO:0000269" key="2">
    <source>
    </source>
</evidence>
<evidence type="ECO:0000303" key="3">
    <source>
    </source>
</evidence>
<evidence type="ECO:0000305" key="4"/>
<evidence type="ECO:0000305" key="5">
    <source>
    </source>
</evidence>
<protein>
    <recommendedName>
        <fullName evidence="3">Alpha-conotoxin GIA</fullName>
    </recommendedName>
</protein>
<reference key="1">
    <citation type="journal article" date="1981" name="J. Biol. Chem.">
        <title>Peptide toxins from Conus geographus venom.</title>
        <authorList>
            <person name="Gray W.R."/>
            <person name="Luque A."/>
            <person name="Olivera B.M."/>
            <person name="Barrett J."/>
            <person name="Cruz L.J."/>
        </authorList>
    </citation>
    <scope>PROTEIN SEQUENCE</scope>
    <scope>AMIDATION AT LYS-15</scope>
    <scope>SUBCELLULAR LOCATION</scope>
</reference>
<name>CAIA_CONGE</name>
<feature type="peptide" id="PRO_0000034873" description="Alpha-conotoxin GIA">
    <location>
        <begin position="1"/>
        <end position="15"/>
    </location>
</feature>
<feature type="modified residue" description="Lysine amide; in form alpha-conotoxin GIA" evidence="2">
    <location>
        <position position="15"/>
    </location>
</feature>
<feature type="disulfide bond" evidence="1">
    <location>
        <begin position="2"/>
        <end position="7"/>
    </location>
</feature>
<feature type="disulfide bond" evidence="1">
    <location>
        <begin position="3"/>
        <end position="13"/>
    </location>
</feature>
<keyword id="KW-0008">Acetylcholine receptor inhibiting toxin</keyword>
<keyword id="KW-0027">Amidation</keyword>
<keyword id="KW-0903">Direct protein sequencing</keyword>
<keyword id="KW-1015">Disulfide bond</keyword>
<keyword id="KW-0872">Ion channel impairing toxin</keyword>
<keyword id="KW-0528">Neurotoxin</keyword>
<keyword id="KW-0629">Postsynaptic neurotoxin</keyword>
<keyword id="KW-0964">Secreted</keyword>
<keyword id="KW-0800">Toxin</keyword>
<organism>
    <name type="scientific">Conus geographus</name>
    <name type="common">Geography cone</name>
    <name type="synonym">Nubecula geographus</name>
    <dbReference type="NCBI Taxonomy" id="6491"/>
    <lineage>
        <taxon>Eukaryota</taxon>
        <taxon>Metazoa</taxon>
        <taxon>Spiralia</taxon>
        <taxon>Lophotrochozoa</taxon>
        <taxon>Mollusca</taxon>
        <taxon>Gastropoda</taxon>
        <taxon>Caenogastropoda</taxon>
        <taxon>Neogastropoda</taxon>
        <taxon>Conoidea</taxon>
        <taxon>Conidae</taxon>
        <taxon>Conus</taxon>
        <taxon>Gastridium</taxon>
    </lineage>
</organism>
<proteinExistence type="evidence at protein level"/>
<sequence length="15" mass="1628">ECCNPACGRHYSCGK</sequence>
<dbReference type="SMR" id="P0DQR7"/>
<dbReference type="EvolutionaryTrace" id="P0DQR7"/>
<dbReference type="GO" id="GO:0005576">
    <property type="term" value="C:extracellular region"/>
    <property type="evidence" value="ECO:0007669"/>
    <property type="project" value="UniProtKB-SubCell"/>
</dbReference>
<dbReference type="GO" id="GO:0035792">
    <property type="term" value="C:host cell postsynaptic membrane"/>
    <property type="evidence" value="ECO:0007669"/>
    <property type="project" value="UniProtKB-KW"/>
</dbReference>
<dbReference type="GO" id="GO:0030550">
    <property type="term" value="F:acetylcholine receptor inhibitor activity"/>
    <property type="evidence" value="ECO:0007669"/>
    <property type="project" value="UniProtKB-KW"/>
</dbReference>
<dbReference type="GO" id="GO:0099106">
    <property type="term" value="F:ion channel regulator activity"/>
    <property type="evidence" value="ECO:0007669"/>
    <property type="project" value="UniProtKB-KW"/>
</dbReference>
<dbReference type="GO" id="GO:0090729">
    <property type="term" value="F:toxin activity"/>
    <property type="evidence" value="ECO:0007669"/>
    <property type="project" value="UniProtKB-KW"/>
</dbReference>
<dbReference type="InterPro" id="IPR018072">
    <property type="entry name" value="Conotoxin_a-typ_CS"/>
</dbReference>
<dbReference type="PROSITE" id="PS60014">
    <property type="entry name" value="ALPHA_CONOTOXIN"/>
    <property type="match status" value="1"/>
</dbReference>
<comment type="function">
    <text>Alpha-conotoxins act on postsynaptic membranes, they bind to the nicotinic acetylcholine receptors (nAChR) and thus inhibit them.</text>
</comment>
<comment type="subcellular location">
    <subcellularLocation>
        <location evidence="2">Secreted</location>
    </subcellularLocation>
</comment>
<comment type="tissue specificity">
    <text evidence="5">Expressed by the venom duct.</text>
</comment>
<comment type="domain">
    <text evidence="4">The cysteine framework is I (CC-C-C). Alpha3/5 pattern.</text>
</comment>
<comment type="similarity">
    <text evidence="4">Belongs to the conotoxin A superfamily.</text>
</comment>